<organism>
    <name type="scientific">Rubrobacter xylanophilus (strain DSM 9941 / JCM 11954 / NBRC 16129 / PRD-1)</name>
    <dbReference type="NCBI Taxonomy" id="266117"/>
    <lineage>
        <taxon>Bacteria</taxon>
        <taxon>Bacillati</taxon>
        <taxon>Actinomycetota</taxon>
        <taxon>Rubrobacteria</taxon>
        <taxon>Rubrobacterales</taxon>
        <taxon>Rubrobacteraceae</taxon>
        <taxon>Rubrobacter</taxon>
    </lineage>
</organism>
<evidence type="ECO:0000255" key="1">
    <source>
        <dbReference type="HAMAP-Rule" id="MF_00093"/>
    </source>
</evidence>
<comment type="function">
    <text evidence="1">Peptide chain release factor 1 directs the termination of translation in response to the peptide chain termination codons UAG and UAA.</text>
</comment>
<comment type="subcellular location">
    <subcellularLocation>
        <location evidence="1">Cytoplasm</location>
    </subcellularLocation>
</comment>
<comment type="PTM">
    <text evidence="1">Methylated by PrmC. Methylation increases the termination efficiency of RF1.</text>
</comment>
<comment type="similarity">
    <text evidence="1">Belongs to the prokaryotic/mitochondrial release factor family.</text>
</comment>
<feature type="chain" id="PRO_0000263342" description="Peptide chain release factor 1">
    <location>
        <begin position="1"/>
        <end position="364"/>
    </location>
</feature>
<feature type="modified residue" description="N5-methylglutamine" evidence="1">
    <location>
        <position position="237"/>
    </location>
</feature>
<gene>
    <name evidence="1" type="primary">prfA</name>
    <name type="ordered locus">Rxyl_1652</name>
</gene>
<dbReference type="EMBL" id="CP000386">
    <property type="protein sequence ID" value="ABG04613.1"/>
    <property type="molecule type" value="Genomic_DNA"/>
</dbReference>
<dbReference type="RefSeq" id="WP_011564630.1">
    <property type="nucleotide sequence ID" value="NC_008148.1"/>
</dbReference>
<dbReference type="SMR" id="Q1AVG5"/>
<dbReference type="STRING" id="266117.Rxyl_1652"/>
<dbReference type="KEGG" id="rxy:Rxyl_1652"/>
<dbReference type="eggNOG" id="COG0216">
    <property type="taxonomic scope" value="Bacteria"/>
</dbReference>
<dbReference type="HOGENOM" id="CLU_036856_0_1_11"/>
<dbReference type="OrthoDB" id="9806673at2"/>
<dbReference type="PhylomeDB" id="Q1AVG5"/>
<dbReference type="Proteomes" id="UP000006637">
    <property type="component" value="Chromosome"/>
</dbReference>
<dbReference type="GO" id="GO:0005737">
    <property type="term" value="C:cytoplasm"/>
    <property type="evidence" value="ECO:0007669"/>
    <property type="project" value="UniProtKB-SubCell"/>
</dbReference>
<dbReference type="GO" id="GO:0016149">
    <property type="term" value="F:translation release factor activity, codon specific"/>
    <property type="evidence" value="ECO:0007669"/>
    <property type="project" value="UniProtKB-UniRule"/>
</dbReference>
<dbReference type="FunFam" id="3.30.160.20:FF:000004">
    <property type="entry name" value="Peptide chain release factor 1"/>
    <property type="match status" value="1"/>
</dbReference>
<dbReference type="FunFam" id="3.30.70.1660:FF:000002">
    <property type="entry name" value="Peptide chain release factor 1"/>
    <property type="match status" value="1"/>
</dbReference>
<dbReference type="Gene3D" id="3.30.160.20">
    <property type="match status" value="1"/>
</dbReference>
<dbReference type="Gene3D" id="3.30.70.1660">
    <property type="match status" value="1"/>
</dbReference>
<dbReference type="Gene3D" id="6.10.140.1950">
    <property type="match status" value="1"/>
</dbReference>
<dbReference type="HAMAP" id="MF_00093">
    <property type="entry name" value="Rel_fac_1"/>
    <property type="match status" value="1"/>
</dbReference>
<dbReference type="InterPro" id="IPR005139">
    <property type="entry name" value="PCRF"/>
</dbReference>
<dbReference type="InterPro" id="IPR000352">
    <property type="entry name" value="Pep_chain_release_fac_I"/>
</dbReference>
<dbReference type="InterPro" id="IPR045853">
    <property type="entry name" value="Pep_chain_release_fac_I_sf"/>
</dbReference>
<dbReference type="InterPro" id="IPR050057">
    <property type="entry name" value="Prokaryotic/Mito_RF"/>
</dbReference>
<dbReference type="InterPro" id="IPR004373">
    <property type="entry name" value="RF-1"/>
</dbReference>
<dbReference type="NCBIfam" id="TIGR00019">
    <property type="entry name" value="prfA"/>
    <property type="match status" value="1"/>
</dbReference>
<dbReference type="NCBIfam" id="NF001859">
    <property type="entry name" value="PRK00591.1"/>
    <property type="match status" value="1"/>
</dbReference>
<dbReference type="PANTHER" id="PTHR43804">
    <property type="entry name" value="LD18447P"/>
    <property type="match status" value="1"/>
</dbReference>
<dbReference type="PANTHER" id="PTHR43804:SF7">
    <property type="entry name" value="LD18447P"/>
    <property type="match status" value="1"/>
</dbReference>
<dbReference type="Pfam" id="PF03462">
    <property type="entry name" value="PCRF"/>
    <property type="match status" value="1"/>
</dbReference>
<dbReference type="Pfam" id="PF00472">
    <property type="entry name" value="RF-1"/>
    <property type="match status" value="1"/>
</dbReference>
<dbReference type="SMART" id="SM00937">
    <property type="entry name" value="PCRF"/>
    <property type="match status" value="1"/>
</dbReference>
<dbReference type="SUPFAM" id="SSF75620">
    <property type="entry name" value="Release factor"/>
    <property type="match status" value="1"/>
</dbReference>
<dbReference type="PROSITE" id="PS00745">
    <property type="entry name" value="RF_PROK_I"/>
    <property type="match status" value="1"/>
</dbReference>
<protein>
    <recommendedName>
        <fullName evidence="1">Peptide chain release factor 1</fullName>
        <shortName evidence="1">RF-1</shortName>
    </recommendedName>
</protein>
<sequence>MDEQVVKLAKETVARYRELTEELSDPAIFNDQRRYAEVAREHSRMRRGAELSERFLEALREEREARELIPAAESAEEREFFAGEAREAGRRAGELAEEIRSELIDRDPNDDKDVILEIRAGTGGDEAALFAGDLYEMYARYADRLGFRHRVLDASPAEVGGYKEIIVEIEGDGAYSVFKHEGGTHRVQRVPKTESQGRIHTSTATVAVLPEAEEVEVEINPNDLEIDVYRSSGPGGQSVNTTDSAVRITHKPTGLVVTCQNEKSQLQNKEQALRILRSRLLEREMRERQEREGQMRLAQFGSGDRSAKIRTYNFPQGRITDHRVGLTVHNLEAVLGGELEEFTKALAAKERADRLAASATGSPG</sequence>
<accession>Q1AVG5</accession>
<proteinExistence type="inferred from homology"/>
<reference key="1">
    <citation type="submission" date="2006-06" db="EMBL/GenBank/DDBJ databases">
        <title>Complete sequence of Rubrobacter xylanophilus DSM 9941.</title>
        <authorList>
            <consortium name="US DOE Joint Genome Institute"/>
            <person name="Copeland A."/>
            <person name="Lucas S."/>
            <person name="Lapidus A."/>
            <person name="Barry K."/>
            <person name="Detter J.C."/>
            <person name="Glavina del Rio T."/>
            <person name="Hammon N."/>
            <person name="Israni S."/>
            <person name="Dalin E."/>
            <person name="Tice H."/>
            <person name="Pitluck S."/>
            <person name="Munk A.C."/>
            <person name="Brettin T."/>
            <person name="Bruce D."/>
            <person name="Han C."/>
            <person name="Tapia R."/>
            <person name="Gilna P."/>
            <person name="Schmutz J."/>
            <person name="Larimer F."/>
            <person name="Land M."/>
            <person name="Hauser L."/>
            <person name="Kyrpides N."/>
            <person name="Lykidis A."/>
            <person name="da Costa M.S."/>
            <person name="Rainey F.A."/>
            <person name="Empadinhas N."/>
            <person name="Jolivet E."/>
            <person name="Battista J.R."/>
            <person name="Richardson P."/>
        </authorList>
    </citation>
    <scope>NUCLEOTIDE SEQUENCE [LARGE SCALE GENOMIC DNA]</scope>
    <source>
        <strain>DSM 9941 / JCM 11954 / NBRC 16129 / PRD-1</strain>
    </source>
</reference>
<name>RF1_RUBXD</name>
<keyword id="KW-0963">Cytoplasm</keyword>
<keyword id="KW-0488">Methylation</keyword>
<keyword id="KW-0648">Protein biosynthesis</keyword>
<keyword id="KW-1185">Reference proteome</keyword>